<organism>
    <name type="scientific">Xenopus tropicalis</name>
    <name type="common">Western clawed frog</name>
    <name type="synonym">Silurana tropicalis</name>
    <dbReference type="NCBI Taxonomy" id="8364"/>
    <lineage>
        <taxon>Eukaryota</taxon>
        <taxon>Metazoa</taxon>
        <taxon>Chordata</taxon>
        <taxon>Craniata</taxon>
        <taxon>Vertebrata</taxon>
        <taxon>Euteleostomi</taxon>
        <taxon>Amphibia</taxon>
        <taxon>Batrachia</taxon>
        <taxon>Anura</taxon>
        <taxon>Pipoidea</taxon>
        <taxon>Pipidae</taxon>
        <taxon>Xenopodinae</taxon>
        <taxon>Xenopus</taxon>
        <taxon>Silurana</taxon>
    </lineage>
</organism>
<dbReference type="EMBL" id="BC167672">
    <property type="protein sequence ID" value="AAI67672.1"/>
    <property type="molecule type" value="mRNA"/>
</dbReference>
<dbReference type="RefSeq" id="NP_001123836.1">
    <property type="nucleotide sequence ID" value="NM_001130364.1"/>
</dbReference>
<dbReference type="SMR" id="B3DM23"/>
<dbReference type="FunCoup" id="B3DM23">
    <property type="interactions" value="899"/>
</dbReference>
<dbReference type="PaxDb" id="8364-ENSXETP00000059598"/>
<dbReference type="GeneID" id="100170593"/>
<dbReference type="KEGG" id="xtr:100170593"/>
<dbReference type="AGR" id="Xenbase:XB-GENE-5903504"/>
<dbReference type="CTD" id="100170593"/>
<dbReference type="Xenbase" id="XB-GENE-5903504">
    <property type="gene designation" value="pou5f3.3"/>
</dbReference>
<dbReference type="eggNOG" id="KOG3802">
    <property type="taxonomic scope" value="Eukaryota"/>
</dbReference>
<dbReference type="InParanoid" id="B3DM23"/>
<dbReference type="OMA" id="PQPFFHV"/>
<dbReference type="OrthoDB" id="6159439at2759"/>
<dbReference type="Reactome" id="R-XTR-373752">
    <property type="pathway name" value="Netrin-1 signaling"/>
</dbReference>
<dbReference type="Reactome" id="R-XTR-418885">
    <property type="pathway name" value="DCC mediated attractive signaling"/>
</dbReference>
<dbReference type="Reactome" id="R-XTR-418886">
    <property type="pathway name" value="Netrin mediated repulsion signals"/>
</dbReference>
<dbReference type="Proteomes" id="UP000008143">
    <property type="component" value="Chromosome 8"/>
</dbReference>
<dbReference type="Bgee" id="ENSXETG00000026475">
    <property type="expression patterns" value="Expressed in gastrula and 7 other cell types or tissues"/>
</dbReference>
<dbReference type="GO" id="GO:0005634">
    <property type="term" value="C:nucleus"/>
    <property type="evidence" value="ECO:0007669"/>
    <property type="project" value="UniProtKB-SubCell"/>
</dbReference>
<dbReference type="GO" id="GO:0005667">
    <property type="term" value="C:transcription regulator complex"/>
    <property type="evidence" value="ECO:0000250"/>
    <property type="project" value="UniProtKB"/>
</dbReference>
<dbReference type="GO" id="GO:0000981">
    <property type="term" value="F:DNA-binding transcription factor activity, RNA polymerase II-specific"/>
    <property type="evidence" value="ECO:0007669"/>
    <property type="project" value="InterPro"/>
</dbReference>
<dbReference type="GO" id="GO:0140297">
    <property type="term" value="F:DNA-binding transcription factor binding"/>
    <property type="evidence" value="ECO:0000250"/>
    <property type="project" value="UniProtKB"/>
</dbReference>
<dbReference type="GO" id="GO:0003723">
    <property type="term" value="F:RNA binding"/>
    <property type="evidence" value="ECO:0000250"/>
    <property type="project" value="UniProtKB"/>
</dbReference>
<dbReference type="GO" id="GO:0043565">
    <property type="term" value="F:sequence-specific DNA binding"/>
    <property type="evidence" value="ECO:0000250"/>
    <property type="project" value="UniProtKB"/>
</dbReference>
<dbReference type="GO" id="GO:0000976">
    <property type="term" value="F:transcription cis-regulatory region binding"/>
    <property type="evidence" value="ECO:0000250"/>
    <property type="project" value="UniProtKB"/>
</dbReference>
<dbReference type="GO" id="GO:0030154">
    <property type="term" value="P:cell differentiation"/>
    <property type="evidence" value="ECO:0007669"/>
    <property type="project" value="UniProtKB-KW"/>
</dbReference>
<dbReference type="GO" id="GO:0032926">
    <property type="term" value="P:negative regulation of activin receptor signaling pathway"/>
    <property type="evidence" value="ECO:0000250"/>
    <property type="project" value="UniProtKB"/>
</dbReference>
<dbReference type="GO" id="GO:0045892">
    <property type="term" value="P:negative regulation of DNA-templated transcription"/>
    <property type="evidence" value="ECO:0000250"/>
    <property type="project" value="UniProtKB"/>
</dbReference>
<dbReference type="CDD" id="cd00086">
    <property type="entry name" value="homeodomain"/>
    <property type="match status" value="1"/>
</dbReference>
<dbReference type="FunFam" id="1.10.260.40:FF:000022">
    <property type="entry name" value="POU domain protein"/>
    <property type="match status" value="1"/>
</dbReference>
<dbReference type="Gene3D" id="1.10.10.60">
    <property type="entry name" value="Homeodomain-like"/>
    <property type="match status" value="1"/>
</dbReference>
<dbReference type="Gene3D" id="1.10.260.40">
    <property type="entry name" value="lambda repressor-like DNA-binding domains"/>
    <property type="match status" value="1"/>
</dbReference>
<dbReference type="InterPro" id="IPR001356">
    <property type="entry name" value="HD"/>
</dbReference>
<dbReference type="InterPro" id="IPR017970">
    <property type="entry name" value="Homeobox_CS"/>
</dbReference>
<dbReference type="InterPro" id="IPR009057">
    <property type="entry name" value="Homeodomain-like_sf"/>
</dbReference>
<dbReference type="InterPro" id="IPR010982">
    <property type="entry name" value="Lambda_DNA-bd_dom_sf"/>
</dbReference>
<dbReference type="InterPro" id="IPR013847">
    <property type="entry name" value="POU"/>
</dbReference>
<dbReference type="InterPro" id="IPR000327">
    <property type="entry name" value="POU_dom"/>
</dbReference>
<dbReference type="InterPro" id="IPR050255">
    <property type="entry name" value="POU_domain_TF"/>
</dbReference>
<dbReference type="PANTHER" id="PTHR11636">
    <property type="entry name" value="POU DOMAIN"/>
    <property type="match status" value="1"/>
</dbReference>
<dbReference type="PANTHER" id="PTHR11636:SF134">
    <property type="entry name" value="POU DOMAIN, CLASS 5, TRANSCRIPTION FACTOR 1.3"/>
    <property type="match status" value="1"/>
</dbReference>
<dbReference type="Pfam" id="PF00046">
    <property type="entry name" value="Homeodomain"/>
    <property type="match status" value="1"/>
</dbReference>
<dbReference type="Pfam" id="PF00157">
    <property type="entry name" value="Pou"/>
    <property type="match status" value="1"/>
</dbReference>
<dbReference type="PRINTS" id="PR00028">
    <property type="entry name" value="POUDOMAIN"/>
</dbReference>
<dbReference type="SMART" id="SM00389">
    <property type="entry name" value="HOX"/>
    <property type="match status" value="1"/>
</dbReference>
<dbReference type="SMART" id="SM00352">
    <property type="entry name" value="POU"/>
    <property type="match status" value="1"/>
</dbReference>
<dbReference type="SUPFAM" id="SSF46689">
    <property type="entry name" value="Homeodomain-like"/>
    <property type="match status" value="1"/>
</dbReference>
<dbReference type="SUPFAM" id="SSF47413">
    <property type="entry name" value="lambda repressor-like DNA-binding domains"/>
    <property type="match status" value="1"/>
</dbReference>
<dbReference type="PROSITE" id="PS00027">
    <property type="entry name" value="HOMEOBOX_1"/>
    <property type="match status" value="1"/>
</dbReference>
<dbReference type="PROSITE" id="PS50071">
    <property type="entry name" value="HOMEOBOX_2"/>
    <property type="match status" value="1"/>
</dbReference>
<dbReference type="PROSITE" id="PS00465">
    <property type="entry name" value="POU_2"/>
    <property type="match status" value="1"/>
</dbReference>
<dbReference type="PROSITE" id="PS51179">
    <property type="entry name" value="POU_3"/>
    <property type="match status" value="1"/>
</dbReference>
<feature type="chain" id="PRO_0000390935" description="POU domain, class 5, transcription factor 1.3">
    <location>
        <begin position="1"/>
        <end position="423"/>
    </location>
</feature>
<feature type="domain" description="POU-specific" evidence="5">
    <location>
        <begin position="207"/>
        <end position="281"/>
    </location>
</feature>
<feature type="DNA-binding region" description="Homeobox" evidence="4">
    <location>
        <begin position="301"/>
        <end position="360"/>
    </location>
</feature>
<feature type="region of interest" description="Disordered" evidence="6">
    <location>
        <begin position="85"/>
        <end position="211"/>
    </location>
</feature>
<feature type="compositionally biased region" description="Basic and acidic residues" evidence="6">
    <location>
        <begin position="94"/>
        <end position="110"/>
    </location>
</feature>
<feature type="compositionally biased region" description="Polar residues" evidence="6">
    <location>
        <begin position="111"/>
        <end position="120"/>
    </location>
</feature>
<feature type="compositionally biased region" description="Polar residues" evidence="6">
    <location>
        <begin position="156"/>
        <end position="173"/>
    </location>
</feature>
<feature type="compositionally biased region" description="Polar residues" evidence="6">
    <location>
        <begin position="194"/>
        <end position="203"/>
    </location>
</feature>
<reference evidence="7" key="1">
    <citation type="submission" date="2008-06" db="EMBL/GenBank/DDBJ databases">
        <authorList>
            <consortium name="NIH - Xenopus Gene Collection (XGC) project"/>
        </authorList>
    </citation>
    <scope>NUCLEOTIDE SEQUENCE [LARGE SCALE MRNA]</scope>
    <source>
        <tissue evidence="7">Gastrula</tissue>
    </source>
</reference>
<protein>
    <recommendedName>
        <fullName>POU domain, class 5, transcription factor 1.3</fullName>
    </recommendedName>
    <alternativeName>
        <fullName evidence="2">POU class V protein oct-60</fullName>
    </alternativeName>
</protein>
<name>P5F13_XENTR</name>
<keyword id="KW-0217">Developmental protein</keyword>
<keyword id="KW-0221">Differentiation</keyword>
<keyword id="KW-0238">DNA-binding</keyword>
<keyword id="KW-0371">Homeobox</keyword>
<keyword id="KW-0539">Nucleus</keyword>
<keyword id="KW-1185">Reference proteome</keyword>
<keyword id="KW-0694">RNA-binding</keyword>
<keyword id="KW-0804">Transcription</keyword>
<keyword id="KW-0805">Transcription regulation</keyword>
<sequence length="423" mass="46732">MDQPVLYNQPAFPNFSYSPGLGQEGGNYQYLGNYNAPSYPQPFFHVPPAIKSEYGAQDEVTGGSCHAAPFDWHLYPHFQFSNQVGALSSGDPSPEGRNEEDHGSISEERSSGTPSPNSPMVPSYAQYWHHAPWQGNPTGQALGLPSRAHPDGGEKPQQSDCSPTASLESGASNTEDEEVSSALSSRAERGLCSPSPNNASFGSGNEEDGTTLEEMEEFAKELKQKRVALGYTQGDIGHALGILYGKMFSQTTICRFESLQLTFKNMCKLKPLLEQWLGEAENNDNLQEMIHKAQLEEQNRKRKMRTCFDSVLKGRLEGHFMCNQKPGARELAEIAKELGLEKDVVRVWFCNRRQKEKSKSRMSKAHEFVGGASPVPSPAEHISQDYGLAPLHPNRPPFYPPPFPRNDLFPHMVPGMSMGVLTG</sequence>
<proteinExistence type="evidence at transcript level"/>
<evidence type="ECO:0000250" key="1">
    <source>
        <dbReference type="UniProtKB" id="Q01860"/>
    </source>
</evidence>
<evidence type="ECO:0000250" key="2">
    <source>
        <dbReference type="UniProtKB" id="Q91989"/>
    </source>
</evidence>
<evidence type="ECO:0000255" key="3"/>
<evidence type="ECO:0000255" key="4">
    <source>
        <dbReference type="PROSITE-ProRule" id="PRU00108"/>
    </source>
</evidence>
<evidence type="ECO:0000255" key="5">
    <source>
        <dbReference type="PROSITE-ProRule" id="PRU00530"/>
    </source>
</evidence>
<evidence type="ECO:0000256" key="6">
    <source>
        <dbReference type="SAM" id="MobiDB-lite"/>
    </source>
</evidence>
<evidence type="ECO:0000312" key="7">
    <source>
        <dbReference type="EMBL" id="AAI67672.1"/>
    </source>
</evidence>
<comment type="function">
    <text evidence="2">Transcription factor that binds to the octamer motif (5'-ATTTGCAT-3'). Antagonizes the activity of nodal/activin signaling during gastrulation to suppress mesendoderm formation. Acts maternally to inhibit vegt and beta-catenin-activated gene transcription, probably by forming a transcriptional repression complex on the promoters of target genes. Binds to an octamer motif in interspersed RNA (By similarity).</text>
</comment>
<comment type="subunit">
    <text evidence="2">Interacts with the transcription factors tcf7l1/tcf3 and vegt.</text>
</comment>
<comment type="subcellular location">
    <subcellularLocation>
        <location evidence="1 4 5">Nucleus</location>
    </subcellularLocation>
</comment>
<comment type="similarity">
    <text evidence="3">Belongs to the POU transcription factor family. Class-5 subfamily.</text>
</comment>
<accession>B3DM23</accession>
<gene>
    <name type="primary">pou5f1.3</name>
    <name evidence="2" type="synonym">oct-60</name>
</gene>